<organism>
    <name type="scientific">Rhodospirillum centenum (strain ATCC 51521 / SW)</name>
    <dbReference type="NCBI Taxonomy" id="414684"/>
    <lineage>
        <taxon>Bacteria</taxon>
        <taxon>Pseudomonadati</taxon>
        <taxon>Pseudomonadota</taxon>
        <taxon>Alphaproteobacteria</taxon>
        <taxon>Rhodospirillales</taxon>
        <taxon>Rhodospirillaceae</taxon>
        <taxon>Rhodospirillum</taxon>
    </lineage>
</organism>
<name>RS12_RHOCS</name>
<dbReference type="EMBL" id="CP000613">
    <property type="protein sequence ID" value="ACI98137.1"/>
    <property type="molecule type" value="Genomic_DNA"/>
</dbReference>
<dbReference type="RefSeq" id="WP_012565929.1">
    <property type="nucleotide sequence ID" value="NC_011420.2"/>
</dbReference>
<dbReference type="SMR" id="B6IRQ1"/>
<dbReference type="STRING" id="414684.RC1_0706"/>
<dbReference type="KEGG" id="rce:RC1_0706"/>
<dbReference type="eggNOG" id="COG0048">
    <property type="taxonomic scope" value="Bacteria"/>
</dbReference>
<dbReference type="HOGENOM" id="CLU_104295_1_2_5"/>
<dbReference type="OrthoDB" id="9802366at2"/>
<dbReference type="Proteomes" id="UP000001591">
    <property type="component" value="Chromosome"/>
</dbReference>
<dbReference type="GO" id="GO:0015935">
    <property type="term" value="C:small ribosomal subunit"/>
    <property type="evidence" value="ECO:0007669"/>
    <property type="project" value="InterPro"/>
</dbReference>
<dbReference type="GO" id="GO:0019843">
    <property type="term" value="F:rRNA binding"/>
    <property type="evidence" value="ECO:0007669"/>
    <property type="project" value="UniProtKB-UniRule"/>
</dbReference>
<dbReference type="GO" id="GO:0003735">
    <property type="term" value="F:structural constituent of ribosome"/>
    <property type="evidence" value="ECO:0007669"/>
    <property type="project" value="InterPro"/>
</dbReference>
<dbReference type="GO" id="GO:0000049">
    <property type="term" value="F:tRNA binding"/>
    <property type="evidence" value="ECO:0007669"/>
    <property type="project" value="UniProtKB-UniRule"/>
</dbReference>
<dbReference type="GO" id="GO:0006412">
    <property type="term" value="P:translation"/>
    <property type="evidence" value="ECO:0007669"/>
    <property type="project" value="UniProtKB-UniRule"/>
</dbReference>
<dbReference type="CDD" id="cd03368">
    <property type="entry name" value="Ribosomal_S12"/>
    <property type="match status" value="1"/>
</dbReference>
<dbReference type="FunFam" id="2.40.50.140:FF:000001">
    <property type="entry name" value="30S ribosomal protein S12"/>
    <property type="match status" value="1"/>
</dbReference>
<dbReference type="Gene3D" id="2.40.50.140">
    <property type="entry name" value="Nucleic acid-binding proteins"/>
    <property type="match status" value="1"/>
</dbReference>
<dbReference type="HAMAP" id="MF_00403_B">
    <property type="entry name" value="Ribosomal_uS12_B"/>
    <property type="match status" value="1"/>
</dbReference>
<dbReference type="InterPro" id="IPR012340">
    <property type="entry name" value="NA-bd_OB-fold"/>
</dbReference>
<dbReference type="InterPro" id="IPR006032">
    <property type="entry name" value="Ribosomal_uS12"/>
</dbReference>
<dbReference type="InterPro" id="IPR005679">
    <property type="entry name" value="Ribosomal_uS12_bac"/>
</dbReference>
<dbReference type="NCBIfam" id="TIGR00981">
    <property type="entry name" value="rpsL_bact"/>
    <property type="match status" value="1"/>
</dbReference>
<dbReference type="PANTHER" id="PTHR11652">
    <property type="entry name" value="30S RIBOSOMAL PROTEIN S12 FAMILY MEMBER"/>
    <property type="match status" value="1"/>
</dbReference>
<dbReference type="Pfam" id="PF00164">
    <property type="entry name" value="Ribosom_S12_S23"/>
    <property type="match status" value="1"/>
</dbReference>
<dbReference type="PIRSF" id="PIRSF002133">
    <property type="entry name" value="Ribosomal_S12/S23"/>
    <property type="match status" value="1"/>
</dbReference>
<dbReference type="PRINTS" id="PR01034">
    <property type="entry name" value="RIBOSOMALS12"/>
</dbReference>
<dbReference type="SUPFAM" id="SSF50249">
    <property type="entry name" value="Nucleic acid-binding proteins"/>
    <property type="match status" value="1"/>
</dbReference>
<dbReference type="PROSITE" id="PS00055">
    <property type="entry name" value="RIBOSOMAL_S12"/>
    <property type="match status" value="1"/>
</dbReference>
<evidence type="ECO:0000250" key="1"/>
<evidence type="ECO:0000255" key="2">
    <source>
        <dbReference type="HAMAP-Rule" id="MF_00403"/>
    </source>
</evidence>
<evidence type="ECO:0000305" key="3"/>
<gene>
    <name evidence="2" type="primary">rpsL</name>
    <name type="ordered locus">RC1_0706</name>
</gene>
<sequence length="123" mass="13976">MPTINQLIRKPRAPLVARDKVPALQECPQKRGVCTRVYTTTPKKPNSALRKVARVRLTNGYEVISYIPGEGHNLQEHSVVMIRGGRVKDLPGVRYHIIRGVLDTQGVKDRRQRRSLYGAKRPK</sequence>
<proteinExistence type="inferred from homology"/>
<accession>B6IRQ1</accession>
<keyword id="KW-0488">Methylation</keyword>
<keyword id="KW-1185">Reference proteome</keyword>
<keyword id="KW-0687">Ribonucleoprotein</keyword>
<keyword id="KW-0689">Ribosomal protein</keyword>
<keyword id="KW-0694">RNA-binding</keyword>
<keyword id="KW-0699">rRNA-binding</keyword>
<keyword id="KW-0820">tRNA-binding</keyword>
<protein>
    <recommendedName>
        <fullName evidence="2">Small ribosomal subunit protein uS12</fullName>
    </recommendedName>
    <alternativeName>
        <fullName evidence="3">30S ribosomal protein S12</fullName>
    </alternativeName>
</protein>
<comment type="function">
    <text evidence="2">With S4 and S5 plays an important role in translational accuracy.</text>
</comment>
<comment type="function">
    <text evidence="2">Interacts with and stabilizes bases of the 16S rRNA that are involved in tRNA selection in the A site and with the mRNA backbone. Located at the interface of the 30S and 50S subunits, it traverses the body of the 30S subunit contacting proteins on the other side and probably holding the rRNA structure together. The combined cluster of proteins S8, S12 and S17 appears to hold together the shoulder and platform of the 30S subunit.</text>
</comment>
<comment type="subunit">
    <text evidence="2">Part of the 30S ribosomal subunit. Contacts proteins S8 and S17. May interact with IF1 in the 30S initiation complex.</text>
</comment>
<comment type="similarity">
    <text evidence="2">Belongs to the universal ribosomal protein uS12 family.</text>
</comment>
<reference key="1">
    <citation type="submission" date="2007-03" db="EMBL/GenBank/DDBJ databases">
        <title>Genome sequence of Rhodospirillum centenum.</title>
        <authorList>
            <person name="Touchman J.W."/>
            <person name="Bauer C."/>
            <person name="Blankenship R.E."/>
        </authorList>
    </citation>
    <scope>NUCLEOTIDE SEQUENCE [LARGE SCALE GENOMIC DNA]</scope>
    <source>
        <strain>ATCC 51521 / SW</strain>
    </source>
</reference>
<feature type="chain" id="PRO_1000123507" description="Small ribosomal subunit protein uS12">
    <location>
        <begin position="1"/>
        <end position="123"/>
    </location>
</feature>
<feature type="modified residue" description="3-methylthioaspartic acid" evidence="1">
    <location>
        <position position="89"/>
    </location>
</feature>